<comment type="function">
    <text evidence="2 5">Cytochrome P450 monooxygenase; part of the gene cluster that mediates the biosynthesis of the lipopeptide antibiotics leucinostatins that show extensive biological activities, including antimalarial, antiviral, antibacterial, antifungal, and antitumor activities, as well as phytotoxic (PubMed:27416025). Leucinostatin A contains nine amino acid residues, including the unusual amino acid 4-methyl-L-proline (MePro), 2-amino-6-hydroxy-4-methyl-8-oxodecanoic acid (AHyMeOA), 3-hydroxyleucine (HyLeu), alpha-aminoisobutyric acid (AIB), beta-Ala, a 4-methylhex-2-enoic acid at the N-terminus as well as a N1,N1-dimethylpropane-1,2-diamine (DPD) at the C-terminus (Probable). The biosynthesis of leucinostatins is probably initiated with the assembly of 4-methylhex-2-enoic acid by a reducing PKS. Two reducing polyketide synthases, lcsB and lcsC, have been identified in the cluster and it is not clear which is the one that assembles 4-methylhex-2-enoic acid since both contain KS, AT, DH, cMT, ER, KR and ACP domains (Probable). The polyketide residue might be transferred to the NRPS lcsA, mediated by two additional enzymes, the acyl-CoA ligase lcsD and the thioesterase lcsE. The linear polyketide carboxylic acid, which is released from PKS, is converted to a CoA thioester by lcsD, and then lcsE hydrolyzes the thiol bond and shuttles the polyketide intermediate to lcsA (Probable). The C domain of the first module catalyzed the condensation of 4-methylhex-2-enoic acid and MePro carried by domain A1, followed by successive condensations of nine amino acids to trigger the elongation of the linear peptide. A5 and A6 domains of lcsA are proposed to incorporate leucine, A2 AHyMeOA, and A3 incorporates HyLeu. A4, A7 and A8 incorporate AIB (Probable). The AHyMeOA in leucinostatin A activated by the A2 might be produced by the second PKS (lcsB or lcsC) present within the cluster (Probable). The MePro is probably produced via leucine cyclization and may originate from a separate pathway, independent of the cluster. Another nonproteinogenic amino acid, beta-Ala, could be produced by an aspartic acid decarboxylase also localized outside of the cluster. Two candidates are VFPBJ_01400 and VFPBJ_10476 (Probable). The final peptide scaffold may be released by the NAD(P)H-dependent thioester reductase (TE) at the C-terminal region of lcsA (Probable). Transamination of the lcsA product by the transaminase lcsP may produce DPD at the C-terminus (Probable). Further hydroxylation steps performed alternatively by the cytochrome P450 monooxygenases lcsI, lcsK and lcsN then yield the non-methylated leucinostatins precursor. It is also possible that leucines can be hydroxylated prior to their incorporation into the peptide (Probable). Varying extents of methylation then lead to the formation of leucinostatins A and B (Probable).</text>
</comment>
<comment type="cofactor">
    <cofactor evidence="1">
        <name>heme</name>
        <dbReference type="ChEBI" id="CHEBI:30413"/>
    </cofactor>
</comment>
<comment type="pathway">
    <text evidence="5">Secondary metabolite biosynthesis.</text>
</comment>
<comment type="induction">
    <text evidence="2">Expression is positively regulated by the leucinostatins biosynthesis cluster-specific transcription regulator lcsF.</text>
</comment>
<comment type="similarity">
    <text evidence="4">Belongs to the cytochrome P450 family.</text>
</comment>
<sequence length="336" mass="37556">MSKAFNNLAFDIMTAVSFDTDFNTMEKPEYRFALKAIEDSNVRLGVLLQAPELSVRSLDKKLFPTAYVAKYKFVKFIRMVMAKRLAASKATSKDIFSFLQDCKDPDSGKELSIAELSTETATFIVAGADTSSTSMAAVSHYITGSSNCYRRVAEEVRSTFCSVDEICLGPKLNSCAFLRACIDEALRLSPPGGSALWREVEQGGTLIDGTYVPGHCEVAVGIYSIHHSAAYYTKPFTYDPERWYRPLDAKGSRSEAPRSPYMPFSVGPRSCVGKPLAIAQMMIVFARLLWEYDMRRADYKSDWAEGDYSSTEYALKDHLTAWKEGPVLRFSPRLKP</sequence>
<evidence type="ECO:0000250" key="1">
    <source>
        <dbReference type="UniProtKB" id="P04798"/>
    </source>
</evidence>
<evidence type="ECO:0000269" key="2">
    <source>
    </source>
</evidence>
<evidence type="ECO:0000303" key="3">
    <source>
    </source>
</evidence>
<evidence type="ECO:0000305" key="4"/>
<evidence type="ECO:0000305" key="5">
    <source>
    </source>
</evidence>
<keyword id="KW-0349">Heme</keyword>
<keyword id="KW-0408">Iron</keyword>
<keyword id="KW-0479">Metal-binding</keyword>
<keyword id="KW-0503">Monooxygenase</keyword>
<keyword id="KW-0560">Oxidoreductase</keyword>
<keyword id="KW-1185">Reference proteome</keyword>
<gene>
    <name evidence="3" type="primary">lcsN</name>
    <name type="ORF">VFPBJ_02528</name>
    <name type="ORF">VFPFJ_04700</name>
</gene>
<feature type="chain" id="PRO_0000446606" description="Cytochrome P450 monooxygenase lcsN">
    <location>
        <begin position="1"/>
        <end position="336"/>
    </location>
</feature>
<feature type="binding site" description="axial binding residue" evidence="1">
    <location>
        <position position="271"/>
    </location>
    <ligand>
        <name>heme</name>
        <dbReference type="ChEBI" id="CHEBI:30413"/>
    </ligand>
    <ligandPart>
        <name>Fe</name>
        <dbReference type="ChEBI" id="CHEBI:18248"/>
    </ligandPart>
</feature>
<reference key="1">
    <citation type="journal article" date="2016" name="PLoS Pathog.">
        <title>Biosynthesis of antibiotic leucinostatins in bio-control fungus Purpureocillium lilacinum and their inhibition on phytophthora revealed by genome mining.</title>
        <authorList>
            <person name="Wang G."/>
            <person name="Liu Z."/>
            <person name="Lin R."/>
            <person name="Li E."/>
            <person name="Mao Z."/>
            <person name="Ling J."/>
            <person name="Yang Y."/>
            <person name="Yin W.B."/>
            <person name="Xie B."/>
        </authorList>
    </citation>
    <scope>NUCLEOTIDE SEQUENCE [LARGE SCALE GENOMIC DNA]</scope>
    <scope>IDENTIFICATION</scope>
    <scope>FUNCTION</scope>
    <scope>INDUCTION</scope>
    <scope>PATHWAY</scope>
    <source>
        <strain>PLBJ-1</strain>
    </source>
</reference>
<accession>A0A179HLW2</accession>
<organism>
    <name type="scientific">Purpureocillium lilacinum</name>
    <name type="common">Paecilomyces lilacinus</name>
    <dbReference type="NCBI Taxonomy" id="33203"/>
    <lineage>
        <taxon>Eukaryota</taxon>
        <taxon>Fungi</taxon>
        <taxon>Dikarya</taxon>
        <taxon>Ascomycota</taxon>
        <taxon>Pezizomycotina</taxon>
        <taxon>Sordariomycetes</taxon>
        <taxon>Hypocreomycetidae</taxon>
        <taxon>Hypocreales</taxon>
        <taxon>Ophiocordycipitaceae</taxon>
        <taxon>Purpureocillium</taxon>
    </lineage>
</organism>
<proteinExistence type="evidence at transcript level"/>
<dbReference type="EC" id="1.-.-.-" evidence="5"/>
<dbReference type="EMBL" id="LSBH01000002">
    <property type="protein sequence ID" value="OAQ83761.1"/>
    <property type="molecule type" value="Genomic_DNA"/>
</dbReference>
<dbReference type="EMBL" id="LSBI01000004">
    <property type="protein sequence ID" value="OAQ90541.1"/>
    <property type="molecule type" value="Genomic_DNA"/>
</dbReference>
<dbReference type="RefSeq" id="XP_018179260.1">
    <property type="nucleotide sequence ID" value="XM_018321780.1"/>
</dbReference>
<dbReference type="SMR" id="A0A179HLW2"/>
<dbReference type="STRING" id="33203.A0A179HLW2"/>
<dbReference type="GeneID" id="28886829"/>
<dbReference type="KEGG" id="plj:28886829"/>
<dbReference type="OMA" id="EYVVADH"/>
<dbReference type="OrthoDB" id="1470350at2759"/>
<dbReference type="Proteomes" id="UP000078240">
    <property type="component" value="Unassembled WGS sequence"/>
</dbReference>
<dbReference type="Proteomes" id="UP000078340">
    <property type="component" value="Unassembled WGS sequence"/>
</dbReference>
<dbReference type="GO" id="GO:0020037">
    <property type="term" value="F:heme binding"/>
    <property type="evidence" value="ECO:0007669"/>
    <property type="project" value="InterPro"/>
</dbReference>
<dbReference type="GO" id="GO:0005506">
    <property type="term" value="F:iron ion binding"/>
    <property type="evidence" value="ECO:0007669"/>
    <property type="project" value="InterPro"/>
</dbReference>
<dbReference type="GO" id="GO:0004497">
    <property type="term" value="F:monooxygenase activity"/>
    <property type="evidence" value="ECO:0007669"/>
    <property type="project" value="UniProtKB-KW"/>
</dbReference>
<dbReference type="GO" id="GO:0016705">
    <property type="term" value="F:oxidoreductase activity, acting on paired donors, with incorporation or reduction of molecular oxygen"/>
    <property type="evidence" value="ECO:0007669"/>
    <property type="project" value="InterPro"/>
</dbReference>
<dbReference type="CDD" id="cd11061">
    <property type="entry name" value="CYP67-like"/>
    <property type="match status" value="1"/>
</dbReference>
<dbReference type="Gene3D" id="1.10.630.10">
    <property type="entry name" value="Cytochrome P450"/>
    <property type="match status" value="1"/>
</dbReference>
<dbReference type="InterPro" id="IPR001128">
    <property type="entry name" value="Cyt_P450"/>
</dbReference>
<dbReference type="InterPro" id="IPR017972">
    <property type="entry name" value="Cyt_P450_CS"/>
</dbReference>
<dbReference type="InterPro" id="IPR002401">
    <property type="entry name" value="Cyt_P450_E_grp-I"/>
</dbReference>
<dbReference type="InterPro" id="IPR036396">
    <property type="entry name" value="Cyt_P450_sf"/>
</dbReference>
<dbReference type="InterPro" id="IPR050121">
    <property type="entry name" value="Cytochrome_P450_monoxygenase"/>
</dbReference>
<dbReference type="PANTHER" id="PTHR24305">
    <property type="entry name" value="CYTOCHROME P450"/>
    <property type="match status" value="1"/>
</dbReference>
<dbReference type="PANTHER" id="PTHR24305:SF237">
    <property type="entry name" value="CYTOCHROME P450 MONOOXYGENASE ATNE-RELATED"/>
    <property type="match status" value="1"/>
</dbReference>
<dbReference type="Pfam" id="PF00067">
    <property type="entry name" value="p450"/>
    <property type="match status" value="1"/>
</dbReference>
<dbReference type="PRINTS" id="PR00463">
    <property type="entry name" value="EP450I"/>
</dbReference>
<dbReference type="PRINTS" id="PR00385">
    <property type="entry name" value="P450"/>
</dbReference>
<dbReference type="SUPFAM" id="SSF48264">
    <property type="entry name" value="Cytochrome P450"/>
    <property type="match status" value="1"/>
</dbReference>
<dbReference type="PROSITE" id="PS00086">
    <property type="entry name" value="CYTOCHROME_P450"/>
    <property type="match status" value="1"/>
</dbReference>
<name>LCSN_PURLI</name>
<protein>
    <recommendedName>
        <fullName evidence="3">Cytochrome P450 monooxygenase lcsN</fullName>
        <ecNumber evidence="5">1.-.-.-</ecNumber>
    </recommendedName>
    <alternativeName>
        <fullName evidence="3">Leucinostatins biosynthesis cluster protein N</fullName>
    </alternativeName>
</protein>